<organism>
    <name type="scientific">Cenarchaeum symbiosum (strain A)</name>
    <dbReference type="NCBI Taxonomy" id="414004"/>
    <lineage>
        <taxon>Archaea</taxon>
        <taxon>Nitrososphaerota</taxon>
        <taxon>Candidatus Cenarchaeales</taxon>
        <taxon>Candidatus Cenarchaeaceae</taxon>
        <taxon>Candidatus Cenarchaeum</taxon>
    </lineage>
</organism>
<keyword id="KW-0030">Aminoacyl-tRNA synthetase</keyword>
<keyword id="KW-0067">ATP-binding</keyword>
<keyword id="KW-0963">Cytoplasm</keyword>
<keyword id="KW-0436">Ligase</keyword>
<keyword id="KW-0547">Nucleotide-binding</keyword>
<keyword id="KW-0648">Protein biosynthesis</keyword>
<keyword id="KW-1185">Reference proteome</keyword>
<reference key="1">
    <citation type="journal article" date="2006" name="Proc. Natl. Acad. Sci. U.S.A.">
        <title>Genomic analysis of the uncultivated marine crenarchaeote Cenarchaeum symbiosum.</title>
        <authorList>
            <person name="Hallam S.J."/>
            <person name="Konstantinidis K.T."/>
            <person name="Putnam N."/>
            <person name="Schleper C."/>
            <person name="Watanabe Y."/>
            <person name="Sugahara J."/>
            <person name="Preston C."/>
            <person name="de la Torre J."/>
            <person name="Richardson P.M."/>
            <person name="DeLong E.F."/>
        </authorList>
    </citation>
    <scope>NUCLEOTIDE SEQUENCE [LARGE SCALE GENOMIC DNA]</scope>
    <source>
        <strain>A</strain>
    </source>
</reference>
<comment type="catalytic activity">
    <reaction>
        <text>tRNA(Lys) + L-lysine + ATP = L-lysyl-tRNA(Lys) + AMP + diphosphate</text>
        <dbReference type="Rhea" id="RHEA:20792"/>
        <dbReference type="Rhea" id="RHEA-COMP:9696"/>
        <dbReference type="Rhea" id="RHEA-COMP:9697"/>
        <dbReference type="ChEBI" id="CHEBI:30616"/>
        <dbReference type="ChEBI" id="CHEBI:32551"/>
        <dbReference type="ChEBI" id="CHEBI:33019"/>
        <dbReference type="ChEBI" id="CHEBI:78442"/>
        <dbReference type="ChEBI" id="CHEBI:78529"/>
        <dbReference type="ChEBI" id="CHEBI:456215"/>
        <dbReference type="EC" id="6.1.1.6"/>
    </reaction>
</comment>
<comment type="subcellular location">
    <subcellularLocation>
        <location evidence="1">Cytoplasm</location>
    </subcellularLocation>
</comment>
<comment type="similarity">
    <text evidence="2">Belongs to the class-I aminoacyl-tRNA synthetase family.</text>
</comment>
<proteinExistence type="inferred from homology"/>
<feature type="chain" id="PRO_0000152748" description="Lysine--tRNA ligase">
    <location>
        <begin position="1"/>
        <end position="525"/>
    </location>
</feature>
<feature type="short sequence motif" description="'HIGH' region">
    <location>
        <begin position="40"/>
        <end position="48"/>
    </location>
</feature>
<feature type="short sequence motif" description="'KMSKS' region">
    <location>
        <begin position="295"/>
        <end position="299"/>
    </location>
</feature>
<feature type="binding site" evidence="1">
    <location>
        <position position="298"/>
    </location>
    <ligand>
        <name>ATP</name>
        <dbReference type="ChEBI" id="CHEBI:30616"/>
    </ligand>
</feature>
<accession>P0CW90</accession>
<accession>A0RWR7</accession>
<accession>O74059</accession>
<evidence type="ECO:0000250" key="1"/>
<evidence type="ECO:0000305" key="2"/>
<gene>
    <name type="primary">lysS</name>
    <name type="ordered locus">CENSYa_1157</name>
</gene>
<name>SYK_CENSY</name>
<dbReference type="EC" id="6.1.1.6"/>
<dbReference type="EMBL" id="DP000238">
    <property type="protein sequence ID" value="ABK77784.1"/>
    <property type="molecule type" value="Genomic_DNA"/>
</dbReference>
<dbReference type="SMR" id="P0CW90"/>
<dbReference type="STRING" id="414004.CENSYa_1157"/>
<dbReference type="EnsemblBacteria" id="ABK77784">
    <property type="protein sequence ID" value="ABK77784"/>
    <property type="gene ID" value="CENSYa_1157"/>
</dbReference>
<dbReference type="KEGG" id="csy:CENSYa_1157"/>
<dbReference type="PATRIC" id="fig|414004.10.peg.1053"/>
<dbReference type="HOGENOM" id="CLU_025562_1_0_2"/>
<dbReference type="Proteomes" id="UP000000758">
    <property type="component" value="Chromosome"/>
</dbReference>
<dbReference type="GO" id="GO:0005737">
    <property type="term" value="C:cytoplasm"/>
    <property type="evidence" value="ECO:0007669"/>
    <property type="project" value="UniProtKB-SubCell"/>
</dbReference>
<dbReference type="GO" id="GO:0005524">
    <property type="term" value="F:ATP binding"/>
    <property type="evidence" value="ECO:0007669"/>
    <property type="project" value="UniProtKB-UniRule"/>
</dbReference>
<dbReference type="GO" id="GO:0004824">
    <property type="term" value="F:lysine-tRNA ligase activity"/>
    <property type="evidence" value="ECO:0007669"/>
    <property type="project" value="UniProtKB-UniRule"/>
</dbReference>
<dbReference type="GO" id="GO:0000049">
    <property type="term" value="F:tRNA binding"/>
    <property type="evidence" value="ECO:0007669"/>
    <property type="project" value="InterPro"/>
</dbReference>
<dbReference type="GO" id="GO:0006430">
    <property type="term" value="P:lysyl-tRNA aminoacylation"/>
    <property type="evidence" value="ECO:0007669"/>
    <property type="project" value="UniProtKB-UniRule"/>
</dbReference>
<dbReference type="Gene3D" id="1.10.10.350">
    <property type="match status" value="1"/>
</dbReference>
<dbReference type="Gene3D" id="1.10.10.770">
    <property type="match status" value="1"/>
</dbReference>
<dbReference type="Gene3D" id="3.40.50.620">
    <property type="entry name" value="HUPs"/>
    <property type="match status" value="2"/>
</dbReference>
<dbReference type="HAMAP" id="MF_00177">
    <property type="entry name" value="Lys_tRNA_synth_class1"/>
    <property type="match status" value="1"/>
</dbReference>
<dbReference type="InterPro" id="IPR020751">
    <property type="entry name" value="aa-tRNA-synth_I_codon-bd_sub2"/>
</dbReference>
<dbReference type="InterPro" id="IPR008925">
    <property type="entry name" value="aa_tRNA-synth_I_cd-bd_sf"/>
</dbReference>
<dbReference type="InterPro" id="IPR002904">
    <property type="entry name" value="Lys-tRNA-ligase"/>
</dbReference>
<dbReference type="InterPro" id="IPR014729">
    <property type="entry name" value="Rossmann-like_a/b/a_fold"/>
</dbReference>
<dbReference type="NCBIfam" id="TIGR00467">
    <property type="entry name" value="lysS_arch"/>
    <property type="match status" value="1"/>
</dbReference>
<dbReference type="PANTHER" id="PTHR37940">
    <property type="entry name" value="LYSINE--TRNA LIGASE"/>
    <property type="match status" value="1"/>
</dbReference>
<dbReference type="PANTHER" id="PTHR37940:SF1">
    <property type="entry name" value="LYSINE--TRNA LIGASE"/>
    <property type="match status" value="1"/>
</dbReference>
<dbReference type="Pfam" id="PF01921">
    <property type="entry name" value="tRNA-synt_1f"/>
    <property type="match status" value="1"/>
</dbReference>
<dbReference type="SUPFAM" id="SSF48163">
    <property type="entry name" value="An anticodon-binding domain of class I aminoacyl-tRNA synthetases"/>
    <property type="match status" value="1"/>
</dbReference>
<dbReference type="SUPFAM" id="SSF52374">
    <property type="entry name" value="Nucleotidylyl transferase"/>
    <property type="match status" value="1"/>
</dbReference>
<sequence length="525" mass="57652">MEETIGRGTWIDKLAHELIEREKALGRSTDMINVESGLGASGIPHMGSLGDAVRAYGVGLALGDMGHAFKLIAYSDDLDGLRKVPEGMPSSLEEHIARPVSAIPDPYGCHDSYGMHMSGLLLEGLDALNIEYDFRRARDTYRDGLLSEQIHGILSSSSKIGEKIAEMVGQEKFRSSLPYFAVCGQCGKMYTAEAVEYVADSRKVRYRCADAKVGGKQVAGCGHEGEADIGGAGGKLAWKVEFAARWQAFDVRFEAYGKDIMDSVRINDWVSDEILSNPHPHHARYEMFLDKGGKKISKSSGNVVTPQKWLRYGTPQSILLLMYKRITGARELGLEDVPALMDEYGDLQREYFAGGGRGGKAREAKNRGLFEYANLLVKQAGPRPHAAYRLLVELSRLFKEDRAERVTKKLVEYGVVDGPSPEIERLIGLAGNYADDMYAAERSDIELDEATKGALSELVELLGSAPGDGLQDAIYGIAKSHGVPPRDFFRALYRIILDTPSGPRIGPFIEDIGREKVAGMIRGRL</sequence>
<protein>
    <recommendedName>
        <fullName>Lysine--tRNA ligase</fullName>
        <ecNumber>6.1.1.6</ecNumber>
    </recommendedName>
    <alternativeName>
        <fullName>Lysyl-tRNA synthetase</fullName>
        <shortName>LysRS</shortName>
    </alternativeName>
</protein>